<feature type="chain" id="PRO_0000164788" description="Gene 57 protein">
    <location>
        <begin position="1"/>
        <end position="152"/>
    </location>
</feature>
<feature type="domain" description="Toprim" evidence="1">
    <location>
        <begin position="57"/>
        <end position="137"/>
    </location>
</feature>
<accession>O64248</accession>
<name>VG57_BPMD2</name>
<evidence type="ECO:0000255" key="1">
    <source>
        <dbReference type="PROSITE-ProRule" id="PRU00995"/>
    </source>
</evidence>
<gene>
    <name type="primary">57</name>
</gene>
<organismHost>
    <name type="scientific">Mycobacterium</name>
    <dbReference type="NCBI Taxonomy" id="1763"/>
</organismHost>
<dbReference type="EMBL" id="AF022214">
    <property type="protein sequence ID" value="AAC18498.1"/>
    <property type="molecule type" value="Genomic_DNA"/>
</dbReference>
<dbReference type="PIR" id="G72806">
    <property type="entry name" value="G72806"/>
</dbReference>
<dbReference type="RefSeq" id="NP_046873.1">
    <property type="nucleotide sequence ID" value="NC_001900.1"/>
</dbReference>
<dbReference type="SMR" id="O64248"/>
<dbReference type="GeneID" id="1261610"/>
<dbReference type="KEGG" id="vg:1261610"/>
<dbReference type="OrthoDB" id="7384at10239"/>
<dbReference type="Proteomes" id="UP000002131">
    <property type="component" value="Segment"/>
</dbReference>
<dbReference type="CDD" id="cd01029">
    <property type="entry name" value="TOPRIM_primases"/>
    <property type="match status" value="1"/>
</dbReference>
<dbReference type="Gene3D" id="3.40.1360.10">
    <property type="match status" value="1"/>
</dbReference>
<dbReference type="InterPro" id="IPR034154">
    <property type="entry name" value="TOPRIM_DnaG/twinkle"/>
</dbReference>
<dbReference type="InterPro" id="IPR006171">
    <property type="entry name" value="TOPRIM_dom"/>
</dbReference>
<dbReference type="Pfam" id="PF13155">
    <property type="entry name" value="Toprim_2"/>
    <property type="match status" value="1"/>
</dbReference>
<dbReference type="SMART" id="SM00493">
    <property type="entry name" value="TOPRIM"/>
    <property type="match status" value="1"/>
</dbReference>
<dbReference type="SUPFAM" id="SSF56731">
    <property type="entry name" value="DNA primase core"/>
    <property type="match status" value="1"/>
</dbReference>
<dbReference type="PROSITE" id="PS50880">
    <property type="entry name" value="TOPRIM"/>
    <property type="match status" value="1"/>
</dbReference>
<organism>
    <name type="scientific">Mycobacterium phage D29</name>
    <name type="common">Mycobacteriophage D29</name>
    <dbReference type="NCBI Taxonomy" id="28369"/>
    <lineage>
        <taxon>Viruses</taxon>
        <taxon>Duplodnaviria</taxon>
        <taxon>Heunggongvirae</taxon>
        <taxon>Uroviricota</taxon>
        <taxon>Caudoviricetes</taxon>
        <taxon>Fromanvirus</taxon>
    </lineage>
</organism>
<sequence length="152" mass="17194">MYRGCLAIPYMRWSPWRNWSVAAIRYRRLDDGKPKYMTMPGDKPRLYNTVALTRYSRDMAITEGEIDAITAELCGIPTVGVPGAQMWKPHFRELFLGYRNVNILADGDEPGMEFAKSVAKTLPNARIIPMPEGEDVNSLVTSQGKDALLERI</sequence>
<keyword id="KW-1185">Reference proteome</keyword>
<proteinExistence type="predicted"/>
<reference key="1">
    <citation type="journal article" date="1998" name="J. Mol. Biol.">
        <title>Genome structure of mycobacteriophage D29: implications for phage evolution.</title>
        <authorList>
            <person name="Ford M.E."/>
            <person name="Sarkis G.J."/>
            <person name="Belanger A.E."/>
            <person name="Hendrix R.W."/>
            <person name="Hatfull G.F."/>
        </authorList>
    </citation>
    <scope>NUCLEOTIDE SEQUENCE [LARGE SCALE GENOMIC DNA]</scope>
</reference>
<protein>
    <recommendedName>
        <fullName>Gene 57 protein</fullName>
    </recommendedName>
    <alternativeName>
        <fullName>Gp57</fullName>
    </alternativeName>
</protein>